<accession>C3NEF5</accession>
<keyword id="KW-0687">Ribonucleoprotein</keyword>
<keyword id="KW-0689">Ribosomal protein</keyword>
<keyword id="KW-0694">RNA-binding</keyword>
<keyword id="KW-0699">rRNA-binding</keyword>
<evidence type="ECO:0000255" key="1">
    <source>
        <dbReference type="HAMAP-Rule" id="MF_00485"/>
    </source>
</evidence>
<evidence type="ECO:0000305" key="2"/>
<name>RS4E_SACI7</name>
<reference key="1">
    <citation type="journal article" date="2009" name="Proc. Natl. Acad. Sci. U.S.A.">
        <title>Biogeography of the Sulfolobus islandicus pan-genome.</title>
        <authorList>
            <person name="Reno M.L."/>
            <person name="Held N.L."/>
            <person name="Fields C.J."/>
            <person name="Burke P.V."/>
            <person name="Whitaker R.J."/>
        </authorList>
    </citation>
    <scope>NUCLEOTIDE SEQUENCE [LARGE SCALE GENOMIC DNA]</scope>
    <source>
        <strain>Y.G.57.14 / Yellowstone #1</strain>
    </source>
</reference>
<proteinExistence type="inferred from homology"/>
<organism>
    <name type="scientific">Saccharolobus islandicus (strain Y.G.57.14 / Yellowstone #1)</name>
    <name type="common">Sulfolobus islandicus</name>
    <dbReference type="NCBI Taxonomy" id="439386"/>
    <lineage>
        <taxon>Archaea</taxon>
        <taxon>Thermoproteota</taxon>
        <taxon>Thermoprotei</taxon>
        <taxon>Sulfolobales</taxon>
        <taxon>Sulfolobaceae</taxon>
        <taxon>Saccharolobus</taxon>
    </lineage>
</organism>
<gene>
    <name evidence="1" type="primary">rps4e</name>
    <name type="ordered locus">YG5714_1427</name>
</gene>
<sequence>MAHITRFETPWFLVISKKQYKWTVRPNAGPHPIEKSIPLAVVIRDYLKLAETVREAKHIIFDGKVLVDGKVRKDYKYPVGLMDIVSIPSADLYFRVIPDNVRFMRLSKISADEAHYKYVRIMNKTTVKGGSIQLNLEDGRNILVDKETAKSFKTLMTLKIELPSQNIVDSFIISEGSYAIFVGGKNVGIHGVVKNINLSKFKSRKYSVITLESKDGNTYQTNLMNVMSIGREKSDMRVD</sequence>
<feature type="chain" id="PRO_1000206442" description="Small ribosomal subunit protein eS4">
    <location>
        <begin position="1"/>
        <end position="239"/>
    </location>
</feature>
<feature type="domain" description="S4 RNA-binding" evidence="1">
    <location>
        <begin position="37"/>
        <end position="99"/>
    </location>
</feature>
<dbReference type="EMBL" id="CP001403">
    <property type="protein sequence ID" value="ACP45694.1"/>
    <property type="molecule type" value="Genomic_DNA"/>
</dbReference>
<dbReference type="RefSeq" id="WP_012711430.1">
    <property type="nucleotide sequence ID" value="NC_012622.1"/>
</dbReference>
<dbReference type="SMR" id="C3NEF5"/>
<dbReference type="KEGG" id="siy:YG5714_1427"/>
<dbReference type="HOGENOM" id="CLU_060400_0_0_2"/>
<dbReference type="Proteomes" id="UP000002308">
    <property type="component" value="Chromosome"/>
</dbReference>
<dbReference type="GO" id="GO:0022627">
    <property type="term" value="C:cytosolic small ribosomal subunit"/>
    <property type="evidence" value="ECO:0007669"/>
    <property type="project" value="TreeGrafter"/>
</dbReference>
<dbReference type="GO" id="GO:0019843">
    <property type="term" value="F:rRNA binding"/>
    <property type="evidence" value="ECO:0007669"/>
    <property type="project" value="UniProtKB-KW"/>
</dbReference>
<dbReference type="GO" id="GO:0003735">
    <property type="term" value="F:structural constituent of ribosome"/>
    <property type="evidence" value="ECO:0007669"/>
    <property type="project" value="InterPro"/>
</dbReference>
<dbReference type="GO" id="GO:0006412">
    <property type="term" value="P:translation"/>
    <property type="evidence" value="ECO:0007669"/>
    <property type="project" value="UniProtKB-UniRule"/>
</dbReference>
<dbReference type="CDD" id="cd06087">
    <property type="entry name" value="KOW_RPS4"/>
    <property type="match status" value="1"/>
</dbReference>
<dbReference type="CDD" id="cd00165">
    <property type="entry name" value="S4"/>
    <property type="match status" value="1"/>
</dbReference>
<dbReference type="FunFam" id="2.30.30.30:FF:000069">
    <property type="entry name" value="30S ribosomal protein S4e"/>
    <property type="match status" value="1"/>
</dbReference>
<dbReference type="FunFam" id="3.10.290.10:FF:000002">
    <property type="entry name" value="40S ribosomal protein S4"/>
    <property type="match status" value="1"/>
</dbReference>
<dbReference type="Gene3D" id="2.30.30.30">
    <property type="match status" value="1"/>
</dbReference>
<dbReference type="Gene3D" id="2.40.50.740">
    <property type="match status" value="1"/>
</dbReference>
<dbReference type="Gene3D" id="3.10.290.10">
    <property type="entry name" value="RNA-binding S4 domain"/>
    <property type="match status" value="1"/>
</dbReference>
<dbReference type="HAMAP" id="MF_00485">
    <property type="entry name" value="Ribosomal_eS4"/>
    <property type="match status" value="1"/>
</dbReference>
<dbReference type="InterPro" id="IPR014722">
    <property type="entry name" value="Rib_uL2_dom2"/>
</dbReference>
<dbReference type="InterPro" id="IPR000876">
    <property type="entry name" value="Ribosomal_eS4"/>
</dbReference>
<dbReference type="InterPro" id="IPR013845">
    <property type="entry name" value="Ribosomal_eS4_central_region"/>
</dbReference>
<dbReference type="InterPro" id="IPR038237">
    <property type="entry name" value="Ribosomal_eS4_central_sf"/>
</dbReference>
<dbReference type="InterPro" id="IPR041982">
    <property type="entry name" value="Ribosomal_eS4_KOW"/>
</dbReference>
<dbReference type="InterPro" id="IPR002942">
    <property type="entry name" value="S4_RNA-bd"/>
</dbReference>
<dbReference type="InterPro" id="IPR036986">
    <property type="entry name" value="S4_RNA-bd_sf"/>
</dbReference>
<dbReference type="NCBIfam" id="NF003312">
    <property type="entry name" value="PRK04313.1"/>
    <property type="match status" value="1"/>
</dbReference>
<dbReference type="PANTHER" id="PTHR11581">
    <property type="entry name" value="30S/40S RIBOSOMAL PROTEIN S4"/>
    <property type="match status" value="1"/>
</dbReference>
<dbReference type="PANTHER" id="PTHR11581:SF0">
    <property type="entry name" value="SMALL RIBOSOMAL SUBUNIT PROTEIN ES4"/>
    <property type="match status" value="1"/>
</dbReference>
<dbReference type="Pfam" id="PF00900">
    <property type="entry name" value="Ribosomal_S4e"/>
    <property type="match status" value="1"/>
</dbReference>
<dbReference type="Pfam" id="PF01479">
    <property type="entry name" value="S4"/>
    <property type="match status" value="1"/>
</dbReference>
<dbReference type="PIRSF" id="PIRSF002116">
    <property type="entry name" value="Ribosomal_S4"/>
    <property type="match status" value="1"/>
</dbReference>
<dbReference type="SMART" id="SM00363">
    <property type="entry name" value="S4"/>
    <property type="match status" value="1"/>
</dbReference>
<dbReference type="SUPFAM" id="SSF55174">
    <property type="entry name" value="Alpha-L RNA-binding motif"/>
    <property type="match status" value="1"/>
</dbReference>
<dbReference type="PROSITE" id="PS50889">
    <property type="entry name" value="S4"/>
    <property type="match status" value="1"/>
</dbReference>
<protein>
    <recommendedName>
        <fullName evidence="1">Small ribosomal subunit protein eS4</fullName>
    </recommendedName>
    <alternativeName>
        <fullName evidence="2">30S ribosomal protein S4e</fullName>
    </alternativeName>
</protein>
<comment type="similarity">
    <text evidence="1">Belongs to the eukaryotic ribosomal protein eS4 family.</text>
</comment>